<sequence>MITVFGLKSKLAPRREKLAEVIYNSLHLGLDIPKGKHAIRFLCLEKEDFYYPFDRSDDYTVIEINLMAGRMEGTKKRLIKMLFSELEYKLGIRAHDVEITIKEQPAHCWGFRGMTGDEARDLDYDIYV</sequence>
<protein>
    <recommendedName>
        <fullName>Uncharacterized protein HI_1388.1</fullName>
    </recommendedName>
</protein>
<organism>
    <name type="scientific">Haemophilus influenzae (strain ATCC 51907 / DSM 11121 / KW20 / Rd)</name>
    <dbReference type="NCBI Taxonomy" id="71421"/>
    <lineage>
        <taxon>Bacteria</taxon>
        <taxon>Pseudomonadati</taxon>
        <taxon>Pseudomonadota</taxon>
        <taxon>Gammaproteobacteria</taxon>
        <taxon>Pasteurellales</taxon>
        <taxon>Pasteurellaceae</taxon>
        <taxon>Haemophilus</taxon>
    </lineage>
</organism>
<gene>
    <name type="ordered locus">HI_1388.1</name>
</gene>
<reference key="1">
    <citation type="journal article" date="1995" name="Science">
        <title>Whole-genome random sequencing and assembly of Haemophilus influenzae Rd.</title>
        <authorList>
            <person name="Fleischmann R.D."/>
            <person name="Adams M.D."/>
            <person name="White O."/>
            <person name="Clayton R.A."/>
            <person name="Kirkness E.F."/>
            <person name="Kerlavage A.R."/>
            <person name="Bult C.J."/>
            <person name="Tomb J.-F."/>
            <person name="Dougherty B.A."/>
            <person name="Merrick J.M."/>
            <person name="McKenney K."/>
            <person name="Sutton G.G."/>
            <person name="FitzHugh W."/>
            <person name="Fields C.A."/>
            <person name="Gocayne J.D."/>
            <person name="Scott J.D."/>
            <person name="Shirley R."/>
            <person name="Liu L.-I."/>
            <person name="Glodek A."/>
            <person name="Kelley J.M."/>
            <person name="Weidman J.F."/>
            <person name="Phillips C.A."/>
            <person name="Spriggs T."/>
            <person name="Hedblom E."/>
            <person name="Cotton M.D."/>
            <person name="Utterback T.R."/>
            <person name="Hanna M.C."/>
            <person name="Nguyen D.T."/>
            <person name="Saudek D.M."/>
            <person name="Brandon R.C."/>
            <person name="Fine L.D."/>
            <person name="Fritchman J.L."/>
            <person name="Fuhrmann J.L."/>
            <person name="Geoghagen N.S.M."/>
            <person name="Gnehm C.L."/>
            <person name="McDonald L.A."/>
            <person name="Small K.V."/>
            <person name="Fraser C.M."/>
            <person name="Smith H.O."/>
            <person name="Venter J.C."/>
        </authorList>
    </citation>
    <scope>NUCLEOTIDE SEQUENCE [LARGE SCALE GENOMIC DNA]</scope>
    <source>
        <strain>ATCC 51907 / DSM 11121 / KW20 / Rd</strain>
    </source>
</reference>
<reference key="2">
    <citation type="submission" date="1998-05" db="EMBL/GenBank/DDBJ databases">
        <authorList>
            <person name="White O."/>
            <person name="Clayton R.A."/>
            <person name="Kerlavage A.R."/>
            <person name="Fleischmann R.D."/>
            <person name="Peterson J."/>
            <person name="Hickey E."/>
            <person name="Dodson R."/>
            <person name="Gwinn M."/>
        </authorList>
    </citation>
    <scope>IDENTIFICATION</scope>
</reference>
<name>Y138A_HAEIN</name>
<evidence type="ECO:0007829" key="1">
    <source>
        <dbReference type="PDB" id="1MWW"/>
    </source>
</evidence>
<dbReference type="EMBL" id="L42023">
    <property type="protein sequence ID" value="AAC23043.1"/>
    <property type="molecule type" value="Genomic_DNA"/>
</dbReference>
<dbReference type="RefSeq" id="NP_439541.1">
    <property type="nucleotide sequence ID" value="NC_000907.1"/>
</dbReference>
<dbReference type="PDB" id="1MWW">
    <property type="method" value="X-ray"/>
    <property type="resolution" value="2.08 A"/>
    <property type="chains" value="A/B/C=1-128"/>
</dbReference>
<dbReference type="PDBsum" id="1MWW"/>
<dbReference type="SMR" id="O86237"/>
<dbReference type="STRING" id="71421.HI_1388.1"/>
<dbReference type="EnsemblBacteria" id="AAC23043">
    <property type="protein sequence ID" value="AAC23043"/>
    <property type="gene ID" value="HI_1388.1"/>
</dbReference>
<dbReference type="KEGG" id="hin:HI_1388.1"/>
<dbReference type="PATRIC" id="fig|71421.8.peg.1446"/>
<dbReference type="eggNOG" id="COG1942">
    <property type="taxonomic scope" value="Bacteria"/>
</dbReference>
<dbReference type="HOGENOM" id="CLU_148073_0_1_6"/>
<dbReference type="OrthoDB" id="9804765at2"/>
<dbReference type="BioCyc" id="HINF71421:G1GJ1-1415-MONOMER"/>
<dbReference type="EvolutionaryTrace" id="O86237"/>
<dbReference type="Proteomes" id="UP000000579">
    <property type="component" value="Chromosome"/>
</dbReference>
<dbReference type="Gene3D" id="3.30.429.10">
    <property type="entry name" value="Macrophage Migration Inhibitory Factor"/>
    <property type="match status" value="1"/>
</dbReference>
<dbReference type="InterPro" id="IPR037479">
    <property type="entry name" value="Tauto_MSAD"/>
</dbReference>
<dbReference type="InterPro" id="IPR014347">
    <property type="entry name" value="Tautomerase/MIF_sf"/>
</dbReference>
<dbReference type="PANTHER" id="PTHR38460">
    <property type="entry name" value="TAUTOMERASE YOLI-RELATED"/>
    <property type="match status" value="1"/>
</dbReference>
<dbReference type="PANTHER" id="PTHR38460:SF1">
    <property type="entry name" value="TAUTOMERASE YOLI-RELATED"/>
    <property type="match status" value="1"/>
</dbReference>
<dbReference type="Pfam" id="PF14552">
    <property type="entry name" value="Tautomerase_2"/>
    <property type="match status" value="1"/>
</dbReference>
<dbReference type="SUPFAM" id="SSF55331">
    <property type="entry name" value="Tautomerase/MIF"/>
    <property type="match status" value="1"/>
</dbReference>
<accession>O86237</accession>
<keyword id="KW-0002">3D-structure</keyword>
<keyword id="KW-1185">Reference proteome</keyword>
<feature type="chain" id="PRO_0000078035" description="Uncharacterized protein HI_1388.1">
    <location>
        <begin position="1"/>
        <end position="128"/>
    </location>
</feature>
<feature type="strand" evidence="1">
    <location>
        <begin position="2"/>
        <end position="7"/>
    </location>
</feature>
<feature type="helix" evidence="1">
    <location>
        <begin position="8"/>
        <end position="30"/>
    </location>
</feature>
<feature type="strand" evidence="1">
    <location>
        <begin position="39"/>
        <end position="44"/>
    </location>
</feature>
<feature type="helix" evidence="1">
    <location>
        <begin position="46"/>
        <end position="48"/>
    </location>
</feature>
<feature type="strand" evidence="1">
    <location>
        <begin position="60"/>
        <end position="68"/>
    </location>
</feature>
<feature type="helix" evidence="1">
    <location>
        <begin position="72"/>
        <end position="90"/>
    </location>
</feature>
<feature type="helix" evidence="1">
    <location>
        <begin position="94"/>
        <end position="96"/>
    </location>
</feature>
<feature type="strand" evidence="1">
    <location>
        <begin position="97"/>
        <end position="104"/>
    </location>
</feature>
<feature type="helix" evidence="1">
    <location>
        <begin position="106"/>
        <end position="108"/>
    </location>
</feature>
<feature type="strand" evidence="1">
    <location>
        <begin position="109"/>
        <end position="111"/>
    </location>
</feature>
<feature type="turn" evidence="1">
    <location>
        <begin position="116"/>
        <end position="118"/>
    </location>
</feature>
<proteinExistence type="evidence at protein level"/>